<dbReference type="EMBL" id="X02369">
    <property type="status" value="NOT_ANNOTATED_CDS"/>
    <property type="molecule type" value="Genomic_DNA"/>
</dbReference>
<dbReference type="EMBL" id="D26185">
    <property type="protein sequence ID" value="BAA05241.1"/>
    <property type="status" value="ALT_FRAME"/>
    <property type="molecule type" value="Genomic_DNA"/>
</dbReference>
<dbReference type="EMBL" id="AL009126">
    <property type="protein sequence ID" value="CAB11781.2"/>
    <property type="molecule type" value="Genomic_DNA"/>
</dbReference>
<dbReference type="PIR" id="S66035">
    <property type="entry name" value="S66035"/>
</dbReference>
<dbReference type="RefSeq" id="NP_387886.2">
    <property type="nucleotide sequence ID" value="NC_000964.3"/>
</dbReference>
<dbReference type="RefSeq" id="WP_003219266.1">
    <property type="nucleotide sequence ID" value="NZ_OZ025638.1"/>
</dbReference>
<dbReference type="SMR" id="P37525"/>
<dbReference type="FunCoup" id="P37525">
    <property type="interactions" value="70"/>
</dbReference>
<dbReference type="STRING" id="224308.BSU00050"/>
<dbReference type="PaxDb" id="224308-BSU00050"/>
<dbReference type="EnsemblBacteria" id="CAB11781">
    <property type="protein sequence ID" value="CAB11781"/>
    <property type="gene ID" value="BSU_00050"/>
</dbReference>
<dbReference type="GeneID" id="86871246"/>
<dbReference type="GeneID" id="939466"/>
<dbReference type="KEGG" id="bsu:BSU00050"/>
<dbReference type="PATRIC" id="fig|224308.179.peg.5"/>
<dbReference type="eggNOG" id="ENOG5032Y6E">
    <property type="taxonomic scope" value="Bacteria"/>
</dbReference>
<dbReference type="InParanoid" id="P37525"/>
<dbReference type="OrthoDB" id="9811390at2"/>
<dbReference type="BioCyc" id="BSUB:BSU00050-MONOMER"/>
<dbReference type="PRO" id="PR:P37525"/>
<dbReference type="Proteomes" id="UP000001570">
    <property type="component" value="Chromosome"/>
</dbReference>
<dbReference type="InterPro" id="IPR007169">
    <property type="entry name" value="RemA-like"/>
</dbReference>
<dbReference type="NCBIfam" id="NF046065">
    <property type="entry name" value="MtxRegRemB"/>
    <property type="match status" value="1"/>
</dbReference>
<dbReference type="Pfam" id="PF04025">
    <property type="entry name" value="RemA-like"/>
    <property type="match status" value="1"/>
</dbReference>
<name>REMB_BACSU</name>
<keyword id="KW-1185">Reference proteome</keyword>
<reference key="1">
    <citation type="journal article" date="1985" name="Nucleic Acids Res.">
        <title>Structure and function of the region of the replication origin of the Bacillus subtilis chromosome. III. Nucleotide sequence of some 10,000 base pairs in the origin region.</title>
        <authorList>
            <person name="Moriya S."/>
            <person name="Ogasawara N."/>
            <person name="Yoshikawa H."/>
        </authorList>
    </citation>
    <scope>NUCLEOTIDE SEQUENCE [GENOMIC DNA]</scope>
</reference>
<reference key="2">
    <citation type="journal article" date="1994" name="DNA Res.">
        <title>Systematic sequencing of the 180 kilobase region of the Bacillus subtilis chromosome containing the replication origin.</title>
        <authorList>
            <person name="Ogasawara N."/>
            <person name="Nakai S."/>
            <person name="Yoshikawa H."/>
        </authorList>
    </citation>
    <scope>NUCLEOTIDE SEQUENCE [GENOMIC DNA]</scope>
    <source>
        <strain>168</strain>
    </source>
</reference>
<reference key="3">
    <citation type="journal article" date="1997" name="Nature">
        <title>The complete genome sequence of the Gram-positive bacterium Bacillus subtilis.</title>
        <authorList>
            <person name="Kunst F."/>
            <person name="Ogasawara N."/>
            <person name="Moszer I."/>
            <person name="Albertini A.M."/>
            <person name="Alloni G."/>
            <person name="Azevedo V."/>
            <person name="Bertero M.G."/>
            <person name="Bessieres P."/>
            <person name="Bolotin A."/>
            <person name="Borchert S."/>
            <person name="Borriss R."/>
            <person name="Boursier L."/>
            <person name="Brans A."/>
            <person name="Braun M."/>
            <person name="Brignell S.C."/>
            <person name="Bron S."/>
            <person name="Brouillet S."/>
            <person name="Bruschi C.V."/>
            <person name="Caldwell B."/>
            <person name="Capuano V."/>
            <person name="Carter N.M."/>
            <person name="Choi S.-K."/>
            <person name="Codani J.-J."/>
            <person name="Connerton I.F."/>
            <person name="Cummings N.J."/>
            <person name="Daniel R.A."/>
            <person name="Denizot F."/>
            <person name="Devine K.M."/>
            <person name="Duesterhoeft A."/>
            <person name="Ehrlich S.D."/>
            <person name="Emmerson P.T."/>
            <person name="Entian K.-D."/>
            <person name="Errington J."/>
            <person name="Fabret C."/>
            <person name="Ferrari E."/>
            <person name="Foulger D."/>
            <person name="Fritz C."/>
            <person name="Fujita M."/>
            <person name="Fujita Y."/>
            <person name="Fuma S."/>
            <person name="Galizzi A."/>
            <person name="Galleron N."/>
            <person name="Ghim S.-Y."/>
            <person name="Glaser P."/>
            <person name="Goffeau A."/>
            <person name="Golightly E.J."/>
            <person name="Grandi G."/>
            <person name="Guiseppi G."/>
            <person name="Guy B.J."/>
            <person name="Haga K."/>
            <person name="Haiech J."/>
            <person name="Harwood C.R."/>
            <person name="Henaut A."/>
            <person name="Hilbert H."/>
            <person name="Holsappel S."/>
            <person name="Hosono S."/>
            <person name="Hullo M.-F."/>
            <person name="Itaya M."/>
            <person name="Jones L.-M."/>
            <person name="Joris B."/>
            <person name="Karamata D."/>
            <person name="Kasahara Y."/>
            <person name="Klaerr-Blanchard M."/>
            <person name="Klein C."/>
            <person name="Kobayashi Y."/>
            <person name="Koetter P."/>
            <person name="Koningstein G."/>
            <person name="Krogh S."/>
            <person name="Kumano M."/>
            <person name="Kurita K."/>
            <person name="Lapidus A."/>
            <person name="Lardinois S."/>
            <person name="Lauber J."/>
            <person name="Lazarevic V."/>
            <person name="Lee S.-M."/>
            <person name="Levine A."/>
            <person name="Liu H."/>
            <person name="Masuda S."/>
            <person name="Mauel C."/>
            <person name="Medigue C."/>
            <person name="Medina N."/>
            <person name="Mellado R.P."/>
            <person name="Mizuno M."/>
            <person name="Moestl D."/>
            <person name="Nakai S."/>
            <person name="Noback M."/>
            <person name="Noone D."/>
            <person name="O'Reilly M."/>
            <person name="Ogawa K."/>
            <person name="Ogiwara A."/>
            <person name="Oudega B."/>
            <person name="Park S.-H."/>
            <person name="Parro V."/>
            <person name="Pohl T.M."/>
            <person name="Portetelle D."/>
            <person name="Porwollik S."/>
            <person name="Prescott A.M."/>
            <person name="Presecan E."/>
            <person name="Pujic P."/>
            <person name="Purnelle B."/>
            <person name="Rapoport G."/>
            <person name="Rey M."/>
            <person name="Reynolds S."/>
            <person name="Rieger M."/>
            <person name="Rivolta C."/>
            <person name="Rocha E."/>
            <person name="Roche B."/>
            <person name="Rose M."/>
            <person name="Sadaie Y."/>
            <person name="Sato T."/>
            <person name="Scanlan E."/>
            <person name="Schleich S."/>
            <person name="Schroeter R."/>
            <person name="Scoffone F."/>
            <person name="Sekiguchi J."/>
            <person name="Sekowska A."/>
            <person name="Seror S.J."/>
            <person name="Serror P."/>
            <person name="Shin B.-S."/>
            <person name="Soldo B."/>
            <person name="Sorokin A."/>
            <person name="Tacconi E."/>
            <person name="Takagi T."/>
            <person name="Takahashi H."/>
            <person name="Takemaru K."/>
            <person name="Takeuchi M."/>
            <person name="Tamakoshi A."/>
            <person name="Tanaka T."/>
            <person name="Terpstra P."/>
            <person name="Tognoni A."/>
            <person name="Tosato V."/>
            <person name="Uchiyama S."/>
            <person name="Vandenbol M."/>
            <person name="Vannier F."/>
            <person name="Vassarotti A."/>
            <person name="Viari A."/>
            <person name="Wambutt R."/>
            <person name="Wedler E."/>
            <person name="Wedler H."/>
            <person name="Weitzenegger T."/>
            <person name="Winters P."/>
            <person name="Wipat A."/>
            <person name="Yamamoto H."/>
            <person name="Yamane K."/>
            <person name="Yasumoto K."/>
            <person name="Yata K."/>
            <person name="Yoshida K."/>
            <person name="Yoshikawa H.-F."/>
            <person name="Zumstein E."/>
            <person name="Yoshikawa H."/>
            <person name="Danchin A."/>
        </authorList>
    </citation>
    <scope>NUCLEOTIDE SEQUENCE [LARGE SCALE GENOMIC DNA]</scope>
    <source>
        <strain>168</strain>
    </source>
</reference>
<reference key="4">
    <citation type="journal article" date="2009" name="Microbiology">
        <title>From a consortium sequence to a unified sequence: the Bacillus subtilis 168 reference genome a decade later.</title>
        <authorList>
            <person name="Barbe V."/>
            <person name="Cruveiller S."/>
            <person name="Kunst F."/>
            <person name="Lenoble P."/>
            <person name="Meurice G."/>
            <person name="Sekowska A."/>
            <person name="Vallenet D."/>
            <person name="Wang T."/>
            <person name="Moszer I."/>
            <person name="Medigue C."/>
            <person name="Danchin A."/>
        </authorList>
    </citation>
    <scope>SEQUENCE REVISION TO C-TERMINUS</scope>
</reference>
<reference key="5">
    <citation type="journal article" date="2009" name="J. Bacteriol.">
        <title>RemA (YlzA) and RemB (YaaB) regulate extracellular matrix operon expression and biofilm formation in Bacillus subtilis.</title>
        <authorList>
            <person name="Winkelman J.T."/>
            <person name="Blair K.M."/>
            <person name="Kearns D.B."/>
        </authorList>
    </citation>
    <scope>FUNCTION</scope>
    <scope>DISRUPTION PHENOTYPE</scope>
</reference>
<sequence length="81" mass="9212">MYIHLGDDFVVSTRDIVGIFDFKANMSPIVEEFLKKQKHKVVPSVNGTPKSIVVTVQNIYYSPLSSSTLKKRAQFMFEIDS</sequence>
<evidence type="ECO:0000269" key="1">
    <source>
    </source>
</evidence>
<evidence type="ECO:0000303" key="2">
    <source>
    </source>
</evidence>
<evidence type="ECO:0000305" key="3"/>
<gene>
    <name evidence="2" type="primary">remB</name>
    <name type="synonym">yaaB</name>
    <name type="ordered locus">BSU00050</name>
</gene>
<proteinExistence type="predicted"/>
<comment type="function">
    <text evidence="1">Regulates the biosynthesis of the extracellular matrix and the biofilm formation. May act as an enhancer of biofilm gene expression. Acts in parallel to the pathway that governs SinR derepression.</text>
</comment>
<comment type="disruption phenotype">
    <text evidence="1">Mutation impairs pellicle formation, complex colony architecture and motility inhibition in a sinR mutant background.</text>
</comment>
<comment type="sequence caution" evidence="3">
    <conflict type="frameshift">
        <sequence resource="EMBL-CDS" id="BAA05241"/>
    </conflict>
</comment>
<comment type="sequence caution" evidence="3">
    <conflict type="frameshift">
        <sequence resource="EMBL" id="X02369"/>
    </conflict>
</comment>
<organism>
    <name type="scientific">Bacillus subtilis (strain 168)</name>
    <dbReference type="NCBI Taxonomy" id="224308"/>
    <lineage>
        <taxon>Bacteria</taxon>
        <taxon>Bacillati</taxon>
        <taxon>Bacillota</taxon>
        <taxon>Bacilli</taxon>
        <taxon>Bacillales</taxon>
        <taxon>Bacillaceae</taxon>
        <taxon>Bacillus</taxon>
    </lineage>
</organism>
<feature type="chain" id="PRO_0000049428" description="Extracellular matrix regulatory protein B">
    <location>
        <begin position="1"/>
        <end position="81"/>
    </location>
</feature>
<protein>
    <recommendedName>
        <fullName evidence="3">Extracellular matrix regulatory protein B</fullName>
    </recommendedName>
    <alternativeName>
        <fullName evidence="2">Regulator of the extracellular matrix B</fullName>
    </alternativeName>
</protein>
<accession>P37525</accession>